<dbReference type="EC" id="2.7.7.3" evidence="1"/>
<dbReference type="EMBL" id="AL111168">
    <property type="protein sequence ID" value="CAL34895.1"/>
    <property type="molecule type" value="Genomic_DNA"/>
</dbReference>
<dbReference type="PIR" id="G81347">
    <property type="entry name" value="G81347"/>
</dbReference>
<dbReference type="RefSeq" id="WP_002852633.1">
    <property type="nucleotide sequence ID" value="NZ_SZUC01000001.1"/>
</dbReference>
<dbReference type="RefSeq" id="YP_002344174.1">
    <property type="nucleotide sequence ID" value="NC_002163.1"/>
</dbReference>
<dbReference type="SMR" id="Q9PPF2"/>
<dbReference type="IntAct" id="Q9PPF2">
    <property type="interactions" value="21"/>
</dbReference>
<dbReference type="STRING" id="192222.Cj0767c"/>
<dbReference type="PaxDb" id="192222-Cj0767c"/>
<dbReference type="EnsemblBacteria" id="CAL34895">
    <property type="protein sequence ID" value="CAL34895"/>
    <property type="gene ID" value="Cj0767c"/>
</dbReference>
<dbReference type="GeneID" id="905077"/>
<dbReference type="KEGG" id="cje:Cj0767c"/>
<dbReference type="PATRIC" id="fig|192222.6.peg.755"/>
<dbReference type="eggNOG" id="COG0669">
    <property type="taxonomic scope" value="Bacteria"/>
</dbReference>
<dbReference type="HOGENOM" id="CLU_100149_0_1_7"/>
<dbReference type="OrthoDB" id="9806661at2"/>
<dbReference type="UniPathway" id="UPA00241">
    <property type="reaction ID" value="UER00355"/>
</dbReference>
<dbReference type="Proteomes" id="UP000000799">
    <property type="component" value="Chromosome"/>
</dbReference>
<dbReference type="GO" id="GO:0005737">
    <property type="term" value="C:cytoplasm"/>
    <property type="evidence" value="ECO:0007669"/>
    <property type="project" value="UniProtKB-SubCell"/>
</dbReference>
<dbReference type="GO" id="GO:0005524">
    <property type="term" value="F:ATP binding"/>
    <property type="evidence" value="ECO:0007669"/>
    <property type="project" value="UniProtKB-KW"/>
</dbReference>
<dbReference type="GO" id="GO:0004595">
    <property type="term" value="F:pantetheine-phosphate adenylyltransferase activity"/>
    <property type="evidence" value="ECO:0007669"/>
    <property type="project" value="UniProtKB-UniRule"/>
</dbReference>
<dbReference type="GO" id="GO:0015937">
    <property type="term" value="P:coenzyme A biosynthetic process"/>
    <property type="evidence" value="ECO:0007669"/>
    <property type="project" value="UniProtKB-UniRule"/>
</dbReference>
<dbReference type="CDD" id="cd02163">
    <property type="entry name" value="PPAT"/>
    <property type="match status" value="1"/>
</dbReference>
<dbReference type="Gene3D" id="3.40.50.620">
    <property type="entry name" value="HUPs"/>
    <property type="match status" value="1"/>
</dbReference>
<dbReference type="HAMAP" id="MF_00151">
    <property type="entry name" value="PPAT_bact"/>
    <property type="match status" value="1"/>
</dbReference>
<dbReference type="InterPro" id="IPR004821">
    <property type="entry name" value="Cyt_trans-like"/>
</dbReference>
<dbReference type="InterPro" id="IPR001980">
    <property type="entry name" value="PPAT"/>
</dbReference>
<dbReference type="InterPro" id="IPR014729">
    <property type="entry name" value="Rossmann-like_a/b/a_fold"/>
</dbReference>
<dbReference type="NCBIfam" id="TIGR01510">
    <property type="entry name" value="coaD_prev_kdtB"/>
    <property type="match status" value="1"/>
</dbReference>
<dbReference type="NCBIfam" id="TIGR00125">
    <property type="entry name" value="cyt_tran_rel"/>
    <property type="match status" value="1"/>
</dbReference>
<dbReference type="PANTHER" id="PTHR21342">
    <property type="entry name" value="PHOSPHOPANTETHEINE ADENYLYLTRANSFERASE"/>
    <property type="match status" value="1"/>
</dbReference>
<dbReference type="PANTHER" id="PTHR21342:SF1">
    <property type="entry name" value="PHOSPHOPANTETHEINE ADENYLYLTRANSFERASE"/>
    <property type="match status" value="1"/>
</dbReference>
<dbReference type="Pfam" id="PF01467">
    <property type="entry name" value="CTP_transf_like"/>
    <property type="match status" value="1"/>
</dbReference>
<dbReference type="PRINTS" id="PR01020">
    <property type="entry name" value="LPSBIOSNTHSS"/>
</dbReference>
<dbReference type="SUPFAM" id="SSF52374">
    <property type="entry name" value="Nucleotidylyl transferase"/>
    <property type="match status" value="1"/>
</dbReference>
<keyword id="KW-0067">ATP-binding</keyword>
<keyword id="KW-0173">Coenzyme A biosynthesis</keyword>
<keyword id="KW-0963">Cytoplasm</keyword>
<keyword id="KW-0460">Magnesium</keyword>
<keyword id="KW-0547">Nucleotide-binding</keyword>
<keyword id="KW-0548">Nucleotidyltransferase</keyword>
<keyword id="KW-1185">Reference proteome</keyword>
<keyword id="KW-0808">Transferase</keyword>
<feature type="chain" id="PRO_0000156188" description="Phosphopantetheine adenylyltransferase">
    <location>
        <begin position="1"/>
        <end position="158"/>
    </location>
</feature>
<feature type="binding site" evidence="1">
    <location>
        <begin position="8"/>
        <end position="9"/>
    </location>
    <ligand>
        <name>ATP</name>
        <dbReference type="ChEBI" id="CHEBI:30616"/>
    </ligand>
</feature>
<feature type="binding site" evidence="1">
    <location>
        <position position="8"/>
    </location>
    <ligand>
        <name>substrate</name>
    </ligand>
</feature>
<feature type="binding site" evidence="1">
    <location>
        <position position="16"/>
    </location>
    <ligand>
        <name>ATP</name>
        <dbReference type="ChEBI" id="CHEBI:30616"/>
    </ligand>
</feature>
<feature type="binding site" evidence="1">
    <location>
        <position position="40"/>
    </location>
    <ligand>
        <name>substrate</name>
    </ligand>
</feature>
<feature type="binding site" evidence="1">
    <location>
        <position position="72"/>
    </location>
    <ligand>
        <name>substrate</name>
    </ligand>
</feature>
<feature type="binding site" evidence="1">
    <location>
        <position position="86"/>
    </location>
    <ligand>
        <name>substrate</name>
    </ligand>
</feature>
<feature type="binding site" evidence="1">
    <location>
        <begin position="87"/>
        <end position="89"/>
    </location>
    <ligand>
        <name>ATP</name>
        <dbReference type="ChEBI" id="CHEBI:30616"/>
    </ligand>
</feature>
<feature type="binding site" evidence="1">
    <location>
        <position position="97"/>
    </location>
    <ligand>
        <name>ATP</name>
        <dbReference type="ChEBI" id="CHEBI:30616"/>
    </ligand>
</feature>
<feature type="binding site" evidence="1">
    <location>
        <begin position="122"/>
        <end position="128"/>
    </location>
    <ligand>
        <name>ATP</name>
        <dbReference type="ChEBI" id="CHEBI:30616"/>
    </ligand>
</feature>
<feature type="site" description="Transition state stabilizer" evidence="1">
    <location>
        <position position="16"/>
    </location>
</feature>
<organism>
    <name type="scientific">Campylobacter jejuni subsp. jejuni serotype O:2 (strain ATCC 700819 / NCTC 11168)</name>
    <dbReference type="NCBI Taxonomy" id="192222"/>
    <lineage>
        <taxon>Bacteria</taxon>
        <taxon>Pseudomonadati</taxon>
        <taxon>Campylobacterota</taxon>
        <taxon>Epsilonproteobacteria</taxon>
        <taxon>Campylobacterales</taxon>
        <taxon>Campylobacteraceae</taxon>
        <taxon>Campylobacter</taxon>
    </lineage>
</organism>
<comment type="function">
    <text evidence="1">Reversibly transfers an adenylyl group from ATP to 4'-phosphopantetheine, yielding dephospho-CoA (dPCoA) and pyrophosphate.</text>
</comment>
<comment type="catalytic activity">
    <reaction evidence="1">
        <text>(R)-4'-phosphopantetheine + ATP + H(+) = 3'-dephospho-CoA + diphosphate</text>
        <dbReference type="Rhea" id="RHEA:19801"/>
        <dbReference type="ChEBI" id="CHEBI:15378"/>
        <dbReference type="ChEBI" id="CHEBI:30616"/>
        <dbReference type="ChEBI" id="CHEBI:33019"/>
        <dbReference type="ChEBI" id="CHEBI:57328"/>
        <dbReference type="ChEBI" id="CHEBI:61723"/>
        <dbReference type="EC" id="2.7.7.3"/>
    </reaction>
</comment>
<comment type="cofactor">
    <cofactor evidence="1">
        <name>Mg(2+)</name>
        <dbReference type="ChEBI" id="CHEBI:18420"/>
    </cofactor>
</comment>
<comment type="pathway">
    <text evidence="1">Cofactor biosynthesis; coenzyme A biosynthesis; CoA from (R)-pantothenate: step 4/5.</text>
</comment>
<comment type="subunit">
    <text evidence="1">Homohexamer.</text>
</comment>
<comment type="subcellular location">
    <subcellularLocation>
        <location evidence="1">Cytoplasm</location>
    </subcellularLocation>
</comment>
<comment type="similarity">
    <text evidence="1">Belongs to the bacterial CoaD family.</text>
</comment>
<accession>Q9PPF2</accession>
<accession>Q0PAC3</accession>
<proteinExistence type="inferred from homology"/>
<evidence type="ECO:0000255" key="1">
    <source>
        <dbReference type="HAMAP-Rule" id="MF_00151"/>
    </source>
</evidence>
<gene>
    <name evidence="1" type="primary">coaD</name>
    <name type="synonym">kdtB</name>
    <name type="ordered locus">Cj0767c</name>
</gene>
<protein>
    <recommendedName>
        <fullName evidence="1">Phosphopantetheine adenylyltransferase</fullName>
        <ecNumber evidence="1">2.7.7.3</ecNumber>
    </recommendedName>
    <alternativeName>
        <fullName evidence="1">Dephospho-CoA pyrophosphorylase</fullName>
    </alternativeName>
    <alternativeName>
        <fullName evidence="1">Pantetheine-phosphate adenylyltransferase</fullName>
        <shortName evidence="1">PPAT</shortName>
    </alternativeName>
</protein>
<sequence>MTCLYPGTFDPITNGHLDVIKRALKIFDEVIVAIAKSEHKKPCYDLEKRKELALLATQNLKNVKIIAFDNLLVDLAKELKVNTIIRGLRAVSDFEYELQIGYANHALWEDMETIYLMPSLKHAFISSSIVRSIVAHGGDVSSLVPKEILPFLKDQSCM</sequence>
<reference key="1">
    <citation type="journal article" date="2000" name="Nature">
        <title>The genome sequence of the food-borne pathogen Campylobacter jejuni reveals hypervariable sequences.</title>
        <authorList>
            <person name="Parkhill J."/>
            <person name="Wren B.W."/>
            <person name="Mungall K.L."/>
            <person name="Ketley J.M."/>
            <person name="Churcher C.M."/>
            <person name="Basham D."/>
            <person name="Chillingworth T."/>
            <person name="Davies R.M."/>
            <person name="Feltwell T."/>
            <person name="Holroyd S."/>
            <person name="Jagels K."/>
            <person name="Karlyshev A.V."/>
            <person name="Moule S."/>
            <person name="Pallen M.J."/>
            <person name="Penn C.W."/>
            <person name="Quail M.A."/>
            <person name="Rajandream M.A."/>
            <person name="Rutherford K.M."/>
            <person name="van Vliet A.H.M."/>
            <person name="Whitehead S."/>
            <person name="Barrell B.G."/>
        </authorList>
    </citation>
    <scope>NUCLEOTIDE SEQUENCE [LARGE SCALE GENOMIC DNA]</scope>
    <source>
        <strain>ATCC 700819 / NCTC 11168</strain>
    </source>
</reference>
<name>COAD_CAMJE</name>